<protein>
    <recommendedName>
        <fullName evidence="1">tRNA modification GTPase MnmE</fullName>
        <ecNumber evidence="1">3.6.-.-</ecNumber>
    </recommendedName>
</protein>
<gene>
    <name evidence="1" type="primary">mnmE</name>
    <name evidence="1" type="synonym">trmE</name>
    <name type="ordered locus">MMOB5620</name>
</gene>
<reference key="1">
    <citation type="journal article" date="2004" name="Genome Res.">
        <title>The complete genome and proteome of Mycoplasma mobile.</title>
        <authorList>
            <person name="Jaffe J.D."/>
            <person name="Stange-Thomann N."/>
            <person name="Smith C."/>
            <person name="DeCaprio D."/>
            <person name="Fisher S."/>
            <person name="Butler J."/>
            <person name="Calvo S."/>
            <person name="Elkins T."/>
            <person name="FitzGerald M.G."/>
            <person name="Hafez N."/>
            <person name="Kodira C.D."/>
            <person name="Major J."/>
            <person name="Wang S."/>
            <person name="Wilkinson J."/>
            <person name="Nicol R."/>
            <person name="Nusbaum C."/>
            <person name="Birren B."/>
            <person name="Berg H.C."/>
            <person name="Church G.M."/>
        </authorList>
    </citation>
    <scope>NUCLEOTIDE SEQUENCE [LARGE SCALE GENOMIC DNA]</scope>
    <source>
        <strain>ATCC 43663 / NCTC 11711 / 163 K</strain>
    </source>
</reference>
<feature type="chain" id="PRO_0000345842" description="tRNA modification GTPase MnmE">
    <location>
        <begin position="1"/>
        <end position="442"/>
    </location>
</feature>
<feature type="domain" description="TrmE-type G">
    <location>
        <begin position="215"/>
        <end position="365"/>
    </location>
</feature>
<feature type="binding site" evidence="1">
    <location>
        <position position="21"/>
    </location>
    <ligand>
        <name>(6S)-5-formyl-5,6,7,8-tetrahydrofolate</name>
        <dbReference type="ChEBI" id="CHEBI:57457"/>
    </ligand>
</feature>
<feature type="binding site" evidence="1">
    <location>
        <position position="79"/>
    </location>
    <ligand>
        <name>(6S)-5-formyl-5,6,7,8-tetrahydrofolate</name>
        <dbReference type="ChEBI" id="CHEBI:57457"/>
    </ligand>
</feature>
<feature type="binding site" evidence="1">
    <location>
        <position position="118"/>
    </location>
    <ligand>
        <name>(6S)-5-formyl-5,6,7,8-tetrahydrofolate</name>
        <dbReference type="ChEBI" id="CHEBI:57457"/>
    </ligand>
</feature>
<feature type="binding site" evidence="1">
    <location>
        <begin position="225"/>
        <end position="230"/>
    </location>
    <ligand>
        <name>GTP</name>
        <dbReference type="ChEBI" id="CHEBI:37565"/>
    </ligand>
</feature>
<feature type="binding site" evidence="1">
    <location>
        <position position="229"/>
    </location>
    <ligand>
        <name>Mg(2+)</name>
        <dbReference type="ChEBI" id="CHEBI:18420"/>
    </ligand>
</feature>
<feature type="binding site" evidence="1">
    <location>
        <begin position="244"/>
        <end position="250"/>
    </location>
    <ligand>
        <name>GTP</name>
        <dbReference type="ChEBI" id="CHEBI:37565"/>
    </ligand>
</feature>
<feature type="binding site" evidence="1">
    <location>
        <position position="250"/>
    </location>
    <ligand>
        <name>Mg(2+)</name>
        <dbReference type="ChEBI" id="CHEBI:18420"/>
    </ligand>
</feature>
<feature type="binding site" evidence="1">
    <location>
        <begin position="269"/>
        <end position="272"/>
    </location>
    <ligand>
        <name>GTP</name>
        <dbReference type="ChEBI" id="CHEBI:37565"/>
    </ligand>
</feature>
<feature type="binding site" evidence="1">
    <location>
        <position position="442"/>
    </location>
    <ligand>
        <name>(6S)-5-formyl-5,6,7,8-tetrahydrofolate</name>
        <dbReference type="ChEBI" id="CHEBI:57457"/>
    </ligand>
</feature>
<evidence type="ECO:0000255" key="1">
    <source>
        <dbReference type="HAMAP-Rule" id="MF_00379"/>
    </source>
</evidence>
<keyword id="KW-0963">Cytoplasm</keyword>
<keyword id="KW-0342">GTP-binding</keyword>
<keyword id="KW-0378">Hydrolase</keyword>
<keyword id="KW-0460">Magnesium</keyword>
<keyword id="KW-0479">Metal-binding</keyword>
<keyword id="KW-0547">Nucleotide-binding</keyword>
<keyword id="KW-0630">Potassium</keyword>
<keyword id="KW-1185">Reference proteome</keyword>
<keyword id="KW-0819">tRNA processing</keyword>
<dbReference type="EC" id="3.6.-.-" evidence="1"/>
<dbReference type="EMBL" id="AE017308">
    <property type="protein sequence ID" value="AAT28048.1"/>
    <property type="molecule type" value="Genomic_DNA"/>
</dbReference>
<dbReference type="RefSeq" id="WP_011265082.1">
    <property type="nucleotide sequence ID" value="NC_006908.1"/>
</dbReference>
<dbReference type="SMR" id="Q6KH82"/>
<dbReference type="STRING" id="267748.MMOB5620"/>
<dbReference type="KEGG" id="mmo:MMOB5620"/>
<dbReference type="eggNOG" id="COG0486">
    <property type="taxonomic scope" value="Bacteria"/>
</dbReference>
<dbReference type="HOGENOM" id="CLU_019624_4_1_14"/>
<dbReference type="OrthoDB" id="9805918at2"/>
<dbReference type="Proteomes" id="UP000009072">
    <property type="component" value="Chromosome"/>
</dbReference>
<dbReference type="GO" id="GO:0005829">
    <property type="term" value="C:cytosol"/>
    <property type="evidence" value="ECO:0007669"/>
    <property type="project" value="TreeGrafter"/>
</dbReference>
<dbReference type="GO" id="GO:0005525">
    <property type="term" value="F:GTP binding"/>
    <property type="evidence" value="ECO:0007669"/>
    <property type="project" value="UniProtKB-UniRule"/>
</dbReference>
<dbReference type="GO" id="GO:0003924">
    <property type="term" value="F:GTPase activity"/>
    <property type="evidence" value="ECO:0007669"/>
    <property type="project" value="UniProtKB-UniRule"/>
</dbReference>
<dbReference type="GO" id="GO:0046872">
    <property type="term" value="F:metal ion binding"/>
    <property type="evidence" value="ECO:0007669"/>
    <property type="project" value="UniProtKB-KW"/>
</dbReference>
<dbReference type="GO" id="GO:0030488">
    <property type="term" value="P:tRNA methylation"/>
    <property type="evidence" value="ECO:0007669"/>
    <property type="project" value="TreeGrafter"/>
</dbReference>
<dbReference type="GO" id="GO:0002098">
    <property type="term" value="P:tRNA wobble uridine modification"/>
    <property type="evidence" value="ECO:0007669"/>
    <property type="project" value="TreeGrafter"/>
</dbReference>
<dbReference type="CDD" id="cd04164">
    <property type="entry name" value="trmE"/>
    <property type="match status" value="1"/>
</dbReference>
<dbReference type="CDD" id="cd14858">
    <property type="entry name" value="TrmE_N"/>
    <property type="match status" value="1"/>
</dbReference>
<dbReference type="Gene3D" id="3.40.50.300">
    <property type="entry name" value="P-loop containing nucleotide triphosphate hydrolases"/>
    <property type="match status" value="1"/>
</dbReference>
<dbReference type="Gene3D" id="3.30.1360.120">
    <property type="entry name" value="Probable tRNA modification gtpase trme, domain 1"/>
    <property type="match status" value="1"/>
</dbReference>
<dbReference type="Gene3D" id="1.20.120.430">
    <property type="entry name" value="tRNA modification GTPase MnmE domain 2"/>
    <property type="match status" value="1"/>
</dbReference>
<dbReference type="HAMAP" id="MF_00379">
    <property type="entry name" value="GTPase_MnmE"/>
    <property type="match status" value="1"/>
</dbReference>
<dbReference type="InterPro" id="IPR031168">
    <property type="entry name" value="G_TrmE"/>
</dbReference>
<dbReference type="InterPro" id="IPR006073">
    <property type="entry name" value="GTP-bd"/>
</dbReference>
<dbReference type="InterPro" id="IPR018948">
    <property type="entry name" value="GTP-bd_TrmE_N"/>
</dbReference>
<dbReference type="InterPro" id="IPR004520">
    <property type="entry name" value="GTPase_MnmE"/>
</dbReference>
<dbReference type="InterPro" id="IPR027368">
    <property type="entry name" value="MnmE_dom2"/>
</dbReference>
<dbReference type="InterPro" id="IPR025867">
    <property type="entry name" value="MnmE_helical"/>
</dbReference>
<dbReference type="InterPro" id="IPR027417">
    <property type="entry name" value="P-loop_NTPase"/>
</dbReference>
<dbReference type="InterPro" id="IPR005225">
    <property type="entry name" value="Small_GTP-bd"/>
</dbReference>
<dbReference type="InterPro" id="IPR027266">
    <property type="entry name" value="TrmE/GcvT_dom1"/>
</dbReference>
<dbReference type="NCBIfam" id="TIGR00450">
    <property type="entry name" value="mnmE_trmE_thdF"/>
    <property type="match status" value="1"/>
</dbReference>
<dbReference type="NCBIfam" id="TIGR00231">
    <property type="entry name" value="small_GTP"/>
    <property type="match status" value="1"/>
</dbReference>
<dbReference type="PANTHER" id="PTHR42714">
    <property type="entry name" value="TRNA MODIFICATION GTPASE GTPBP3"/>
    <property type="match status" value="1"/>
</dbReference>
<dbReference type="PANTHER" id="PTHR42714:SF2">
    <property type="entry name" value="TRNA MODIFICATION GTPASE GTPBP3, MITOCHONDRIAL"/>
    <property type="match status" value="1"/>
</dbReference>
<dbReference type="Pfam" id="PF01926">
    <property type="entry name" value="MMR_HSR1"/>
    <property type="match status" value="1"/>
</dbReference>
<dbReference type="Pfam" id="PF12631">
    <property type="entry name" value="MnmE_helical"/>
    <property type="match status" value="1"/>
</dbReference>
<dbReference type="Pfam" id="PF10396">
    <property type="entry name" value="TrmE_N"/>
    <property type="match status" value="1"/>
</dbReference>
<dbReference type="PRINTS" id="PR00326">
    <property type="entry name" value="GTP1OBG"/>
</dbReference>
<dbReference type="SUPFAM" id="SSF103025">
    <property type="entry name" value="Folate-binding domain"/>
    <property type="match status" value="1"/>
</dbReference>
<dbReference type="SUPFAM" id="SSF52540">
    <property type="entry name" value="P-loop containing nucleoside triphosphate hydrolases"/>
    <property type="match status" value="1"/>
</dbReference>
<dbReference type="SUPFAM" id="SSF116878">
    <property type="entry name" value="TrmE connector domain"/>
    <property type="match status" value="1"/>
</dbReference>
<dbReference type="PROSITE" id="PS51709">
    <property type="entry name" value="G_TRME"/>
    <property type="match status" value="1"/>
</dbReference>
<proteinExistence type="inferred from homology"/>
<sequence length="442" mass="49699">MFDTIAAIATGNSIQAISIIRISGSDSFKIVKKIFTGKIGKNKTITYGNILNHERKIVDEVLVAWFEGTNNFTGENSVEIFCHGGIVVTNLVLQLLIANGARLAERGEFSRRSFLNKKMDFVKAEAINDLIHAKTIRQAQISVNKFDGKISKDIESYIDTLLYLIATCETNIDYPEYDDVENLHNETLLPKIKELIQKLNDLIKISEKASIIYNGLKIAIVGKPNVGKSSLLNALLNEERAIVTNEAGTTRDVIEASFQIDGFLFSISDTAGLREVQNNIENLGIQKTFETIEKSDIILHIIQPNEAENDFDKQIEIKSKNKIYLKILNKKDLIKNHNKQNHMIKISTLNKDIIELENKLSSYCNDVEWDNPNLIYSQNQLSMIKKSYLALSEAKEGLESGLTPDVVIIDITKAWESLVNIKGKADNELLLDKMFSNFCLGK</sequence>
<comment type="function">
    <text evidence="1">Exhibits a very high intrinsic GTPase hydrolysis rate. Involved in the addition of a carboxymethylaminomethyl (cmnm) group at the wobble position (U34) of certain tRNAs, forming tRNA-cmnm(5)s(2)U34.</text>
</comment>
<comment type="cofactor">
    <cofactor evidence="1">
        <name>K(+)</name>
        <dbReference type="ChEBI" id="CHEBI:29103"/>
    </cofactor>
    <text evidence="1">Binds 1 potassium ion per subunit.</text>
</comment>
<comment type="subunit">
    <text evidence="1">Homodimer. Heterotetramer of two MnmE and two MnmG subunits.</text>
</comment>
<comment type="subcellular location">
    <subcellularLocation>
        <location evidence="1">Cytoplasm</location>
    </subcellularLocation>
</comment>
<comment type="similarity">
    <text evidence="1">Belongs to the TRAFAC class TrmE-Era-EngA-EngB-Septin-like GTPase superfamily. TrmE GTPase family.</text>
</comment>
<organism>
    <name type="scientific">Mycoplasma mobile (strain ATCC 43663 / 163K / NCTC 11711)</name>
    <name type="common">Mesomycoplasma mobile</name>
    <dbReference type="NCBI Taxonomy" id="267748"/>
    <lineage>
        <taxon>Bacteria</taxon>
        <taxon>Bacillati</taxon>
        <taxon>Mycoplasmatota</taxon>
        <taxon>Mycoplasmoidales</taxon>
        <taxon>Metamycoplasmataceae</taxon>
        <taxon>Mesomycoplasma</taxon>
    </lineage>
</organism>
<name>MNME_MYCM1</name>
<accession>Q6KH82</accession>